<protein>
    <recommendedName>
        <fullName evidence="1">Lipoyl synthase</fullName>
        <ecNumber evidence="1">2.8.1.8</ecNumber>
    </recommendedName>
    <alternativeName>
        <fullName evidence="1">Lip-syn</fullName>
        <shortName evidence="1">LS</shortName>
    </alternativeName>
    <alternativeName>
        <fullName evidence="1">Lipoate synthase</fullName>
    </alternativeName>
    <alternativeName>
        <fullName evidence="1">Lipoic acid synthase</fullName>
    </alternativeName>
    <alternativeName>
        <fullName evidence="1">Sulfur insertion protein LipA</fullName>
    </alternativeName>
</protein>
<dbReference type="EC" id="2.8.1.8" evidence="1"/>
<dbReference type="EMBL" id="CR626927">
    <property type="protein sequence ID" value="CAH06641.1"/>
    <property type="molecule type" value="Genomic_DNA"/>
</dbReference>
<dbReference type="RefSeq" id="WP_005795984.1">
    <property type="nucleotide sequence ID" value="NZ_UFTH01000001.1"/>
</dbReference>
<dbReference type="SMR" id="Q5LGU6"/>
<dbReference type="PaxDb" id="272559-BF9343_0860"/>
<dbReference type="DNASU" id="3288526"/>
<dbReference type="GeneID" id="60369062"/>
<dbReference type="KEGG" id="bfs:BF9343_0860"/>
<dbReference type="eggNOG" id="COG0320">
    <property type="taxonomic scope" value="Bacteria"/>
</dbReference>
<dbReference type="HOGENOM" id="CLU_033144_2_1_10"/>
<dbReference type="UniPathway" id="UPA00538">
    <property type="reaction ID" value="UER00593"/>
</dbReference>
<dbReference type="Proteomes" id="UP000006731">
    <property type="component" value="Chromosome"/>
</dbReference>
<dbReference type="GO" id="GO:0005737">
    <property type="term" value="C:cytoplasm"/>
    <property type="evidence" value="ECO:0007669"/>
    <property type="project" value="UniProtKB-SubCell"/>
</dbReference>
<dbReference type="GO" id="GO:0051539">
    <property type="term" value="F:4 iron, 4 sulfur cluster binding"/>
    <property type="evidence" value="ECO:0007669"/>
    <property type="project" value="UniProtKB-UniRule"/>
</dbReference>
<dbReference type="GO" id="GO:0016992">
    <property type="term" value="F:lipoate synthase activity"/>
    <property type="evidence" value="ECO:0007669"/>
    <property type="project" value="UniProtKB-UniRule"/>
</dbReference>
<dbReference type="GO" id="GO:0046872">
    <property type="term" value="F:metal ion binding"/>
    <property type="evidence" value="ECO:0007669"/>
    <property type="project" value="UniProtKB-KW"/>
</dbReference>
<dbReference type="CDD" id="cd01335">
    <property type="entry name" value="Radical_SAM"/>
    <property type="match status" value="1"/>
</dbReference>
<dbReference type="FunFam" id="3.20.20.70:FF:000040">
    <property type="entry name" value="Lipoyl synthase"/>
    <property type="match status" value="1"/>
</dbReference>
<dbReference type="Gene3D" id="3.20.20.70">
    <property type="entry name" value="Aldolase class I"/>
    <property type="match status" value="1"/>
</dbReference>
<dbReference type="HAMAP" id="MF_00206">
    <property type="entry name" value="Lipoyl_synth"/>
    <property type="match status" value="1"/>
</dbReference>
<dbReference type="InterPro" id="IPR013785">
    <property type="entry name" value="Aldolase_TIM"/>
</dbReference>
<dbReference type="InterPro" id="IPR006638">
    <property type="entry name" value="Elp3/MiaA/NifB-like_rSAM"/>
</dbReference>
<dbReference type="InterPro" id="IPR003698">
    <property type="entry name" value="Lipoyl_synth"/>
</dbReference>
<dbReference type="InterPro" id="IPR007197">
    <property type="entry name" value="rSAM"/>
</dbReference>
<dbReference type="NCBIfam" id="TIGR00510">
    <property type="entry name" value="lipA"/>
    <property type="match status" value="1"/>
</dbReference>
<dbReference type="NCBIfam" id="NF004019">
    <property type="entry name" value="PRK05481.1"/>
    <property type="match status" value="1"/>
</dbReference>
<dbReference type="NCBIfam" id="NF009544">
    <property type="entry name" value="PRK12928.1"/>
    <property type="match status" value="1"/>
</dbReference>
<dbReference type="PANTHER" id="PTHR10949">
    <property type="entry name" value="LIPOYL SYNTHASE"/>
    <property type="match status" value="1"/>
</dbReference>
<dbReference type="PANTHER" id="PTHR10949:SF0">
    <property type="entry name" value="LIPOYL SYNTHASE, MITOCHONDRIAL"/>
    <property type="match status" value="1"/>
</dbReference>
<dbReference type="Pfam" id="PF04055">
    <property type="entry name" value="Radical_SAM"/>
    <property type="match status" value="1"/>
</dbReference>
<dbReference type="PIRSF" id="PIRSF005963">
    <property type="entry name" value="Lipoyl_synth"/>
    <property type="match status" value="1"/>
</dbReference>
<dbReference type="SFLD" id="SFLDF00271">
    <property type="entry name" value="lipoyl_synthase"/>
    <property type="match status" value="1"/>
</dbReference>
<dbReference type="SFLD" id="SFLDG01058">
    <property type="entry name" value="lipoyl_synthase_like"/>
    <property type="match status" value="1"/>
</dbReference>
<dbReference type="SMART" id="SM00729">
    <property type="entry name" value="Elp3"/>
    <property type="match status" value="1"/>
</dbReference>
<dbReference type="SUPFAM" id="SSF102114">
    <property type="entry name" value="Radical SAM enzymes"/>
    <property type="match status" value="1"/>
</dbReference>
<dbReference type="PROSITE" id="PS51918">
    <property type="entry name" value="RADICAL_SAM"/>
    <property type="match status" value="1"/>
</dbReference>
<name>LIPA_BACFN</name>
<accession>Q5LGU6</accession>
<organism>
    <name type="scientific">Bacteroides fragilis (strain ATCC 25285 / DSM 2151 / CCUG 4856 / JCM 11019 / LMG 10263 / NCTC 9343 / Onslow / VPI 2553 / EN-2)</name>
    <dbReference type="NCBI Taxonomy" id="272559"/>
    <lineage>
        <taxon>Bacteria</taxon>
        <taxon>Pseudomonadati</taxon>
        <taxon>Bacteroidota</taxon>
        <taxon>Bacteroidia</taxon>
        <taxon>Bacteroidales</taxon>
        <taxon>Bacteroidaceae</taxon>
        <taxon>Bacteroides</taxon>
    </lineage>
</organism>
<evidence type="ECO:0000255" key="1">
    <source>
        <dbReference type="HAMAP-Rule" id="MF_00206"/>
    </source>
</evidence>
<evidence type="ECO:0000255" key="2">
    <source>
        <dbReference type="PROSITE-ProRule" id="PRU01266"/>
    </source>
</evidence>
<proteinExistence type="inferred from homology"/>
<gene>
    <name evidence="1" type="primary">lipA</name>
    <name type="ordered locus">BF0898</name>
</gene>
<reference key="1">
    <citation type="journal article" date="2005" name="Science">
        <title>Extensive DNA inversions in the B. fragilis genome control variable gene expression.</title>
        <authorList>
            <person name="Cerdeno-Tarraga A.-M."/>
            <person name="Patrick S."/>
            <person name="Crossman L.C."/>
            <person name="Blakely G."/>
            <person name="Abratt V."/>
            <person name="Lennard N."/>
            <person name="Poxton I."/>
            <person name="Duerden B."/>
            <person name="Harris B."/>
            <person name="Quail M.A."/>
            <person name="Barron A."/>
            <person name="Clark L."/>
            <person name="Corton C."/>
            <person name="Doggett J."/>
            <person name="Holden M.T.G."/>
            <person name="Larke N."/>
            <person name="Line A."/>
            <person name="Lord A."/>
            <person name="Norbertczak H."/>
            <person name="Ormond D."/>
            <person name="Price C."/>
            <person name="Rabbinowitsch E."/>
            <person name="Woodward J."/>
            <person name="Barrell B.G."/>
            <person name="Parkhill J."/>
        </authorList>
    </citation>
    <scope>NUCLEOTIDE SEQUENCE [LARGE SCALE GENOMIC DNA]</scope>
    <source>
        <strain>ATCC 25285 / DSM 2151 / CCUG 4856 / JCM 11019 / LMG 10263 / NCTC 9343 / Onslow / VPI 2553 / EN-2</strain>
    </source>
</reference>
<keyword id="KW-0004">4Fe-4S</keyword>
<keyword id="KW-0963">Cytoplasm</keyword>
<keyword id="KW-0408">Iron</keyword>
<keyword id="KW-0411">Iron-sulfur</keyword>
<keyword id="KW-0479">Metal-binding</keyword>
<keyword id="KW-0949">S-adenosyl-L-methionine</keyword>
<keyword id="KW-0808">Transferase</keyword>
<comment type="function">
    <text evidence="1">Catalyzes the radical-mediated insertion of two sulfur atoms into the C-6 and C-8 positions of the octanoyl moiety bound to the lipoyl domains of lipoate-dependent enzymes, thereby converting the octanoylated domains into lipoylated derivatives.</text>
</comment>
<comment type="catalytic activity">
    <reaction evidence="1">
        <text>[[Fe-S] cluster scaffold protein carrying a second [4Fe-4S](2+) cluster] + N(6)-octanoyl-L-lysyl-[protein] + 2 oxidized [2Fe-2S]-[ferredoxin] + 2 S-adenosyl-L-methionine + 4 H(+) = [[Fe-S] cluster scaffold protein] + N(6)-[(R)-dihydrolipoyl]-L-lysyl-[protein] + 4 Fe(3+) + 2 hydrogen sulfide + 2 5'-deoxyadenosine + 2 L-methionine + 2 reduced [2Fe-2S]-[ferredoxin]</text>
        <dbReference type="Rhea" id="RHEA:16585"/>
        <dbReference type="Rhea" id="RHEA-COMP:9928"/>
        <dbReference type="Rhea" id="RHEA-COMP:10000"/>
        <dbReference type="Rhea" id="RHEA-COMP:10001"/>
        <dbReference type="Rhea" id="RHEA-COMP:10475"/>
        <dbReference type="Rhea" id="RHEA-COMP:14568"/>
        <dbReference type="Rhea" id="RHEA-COMP:14569"/>
        <dbReference type="ChEBI" id="CHEBI:15378"/>
        <dbReference type="ChEBI" id="CHEBI:17319"/>
        <dbReference type="ChEBI" id="CHEBI:29034"/>
        <dbReference type="ChEBI" id="CHEBI:29919"/>
        <dbReference type="ChEBI" id="CHEBI:33722"/>
        <dbReference type="ChEBI" id="CHEBI:33737"/>
        <dbReference type="ChEBI" id="CHEBI:33738"/>
        <dbReference type="ChEBI" id="CHEBI:57844"/>
        <dbReference type="ChEBI" id="CHEBI:59789"/>
        <dbReference type="ChEBI" id="CHEBI:78809"/>
        <dbReference type="ChEBI" id="CHEBI:83100"/>
        <dbReference type="EC" id="2.8.1.8"/>
    </reaction>
</comment>
<comment type="cofactor">
    <cofactor evidence="1">
        <name>[4Fe-4S] cluster</name>
        <dbReference type="ChEBI" id="CHEBI:49883"/>
    </cofactor>
    <text evidence="1">Binds 2 [4Fe-4S] clusters per subunit. One cluster is coordinated with 3 cysteines and an exchangeable S-adenosyl-L-methionine.</text>
</comment>
<comment type="pathway">
    <text evidence="1">Protein modification; protein lipoylation via endogenous pathway; protein N(6)-(lipoyl)lysine from octanoyl-[acyl-carrier-protein]: step 2/2.</text>
</comment>
<comment type="subcellular location">
    <subcellularLocation>
        <location evidence="1">Cytoplasm</location>
    </subcellularLocation>
</comment>
<comment type="similarity">
    <text evidence="1">Belongs to the radical SAM superfamily. Lipoyl synthase family.</text>
</comment>
<feature type="chain" id="PRO_0000325234" description="Lipoyl synthase">
    <location>
        <begin position="1"/>
        <end position="288"/>
    </location>
</feature>
<feature type="domain" description="Radical SAM core" evidence="2">
    <location>
        <begin position="51"/>
        <end position="265"/>
    </location>
</feature>
<feature type="binding site" evidence="1">
    <location>
        <position position="39"/>
    </location>
    <ligand>
        <name>[4Fe-4S] cluster</name>
        <dbReference type="ChEBI" id="CHEBI:49883"/>
        <label>1</label>
    </ligand>
</feature>
<feature type="binding site" evidence="1">
    <location>
        <position position="44"/>
    </location>
    <ligand>
        <name>[4Fe-4S] cluster</name>
        <dbReference type="ChEBI" id="CHEBI:49883"/>
        <label>1</label>
    </ligand>
</feature>
<feature type="binding site" evidence="1">
    <location>
        <position position="50"/>
    </location>
    <ligand>
        <name>[4Fe-4S] cluster</name>
        <dbReference type="ChEBI" id="CHEBI:49883"/>
        <label>1</label>
    </ligand>
</feature>
<feature type="binding site" evidence="1">
    <location>
        <position position="65"/>
    </location>
    <ligand>
        <name>[4Fe-4S] cluster</name>
        <dbReference type="ChEBI" id="CHEBI:49883"/>
        <label>2</label>
        <note>4Fe-4S-S-AdoMet</note>
    </ligand>
</feature>
<feature type="binding site" evidence="1">
    <location>
        <position position="69"/>
    </location>
    <ligand>
        <name>[4Fe-4S] cluster</name>
        <dbReference type="ChEBI" id="CHEBI:49883"/>
        <label>2</label>
        <note>4Fe-4S-S-AdoMet</note>
    </ligand>
</feature>
<feature type="binding site" evidence="1">
    <location>
        <position position="72"/>
    </location>
    <ligand>
        <name>[4Fe-4S] cluster</name>
        <dbReference type="ChEBI" id="CHEBI:49883"/>
        <label>2</label>
        <note>4Fe-4S-S-AdoMet</note>
    </ligand>
</feature>
<feature type="binding site" evidence="1">
    <location>
        <position position="276"/>
    </location>
    <ligand>
        <name>[4Fe-4S] cluster</name>
        <dbReference type="ChEBI" id="CHEBI:49883"/>
        <label>1</label>
    </ligand>
</feature>
<sequence>MGNDKRVRKPEWLKISIGANERYTETKRIVESHCLHTICSSGRCPNMGECWGKGTATFMIAGDICTRSCKFCNTQTGRPLPLDPDEPTHVAESIALMKLSHAVITSVDRDDLPDLGAAHWAQTIREIKRLNPETTTEVLIPDFQGRKELVDQVIKACPEIISHNMETVKRISPQVRSAANYHTSLEVIRQIAESGITAKSGIMVGLGETPAEVEELMDDLISVGCKILTIGQYLQPTHKHFPVAAYITPEQFAVYKETGLKKGFEQVESAPLVRSSYHAEKHIRFNNK</sequence>